<organism>
    <name type="scientific">Pseudomonas aeruginosa (strain UCBPP-PA14)</name>
    <dbReference type="NCBI Taxonomy" id="208963"/>
    <lineage>
        <taxon>Bacteria</taxon>
        <taxon>Pseudomonadati</taxon>
        <taxon>Pseudomonadota</taxon>
        <taxon>Gammaproteobacteria</taxon>
        <taxon>Pseudomonadales</taxon>
        <taxon>Pseudomonadaceae</taxon>
        <taxon>Pseudomonas</taxon>
    </lineage>
</organism>
<reference key="1">
    <citation type="journal article" date="2006" name="Genome Biol.">
        <title>Genomic analysis reveals that Pseudomonas aeruginosa virulence is combinatorial.</title>
        <authorList>
            <person name="Lee D.G."/>
            <person name="Urbach J.M."/>
            <person name="Wu G."/>
            <person name="Liberati N.T."/>
            <person name="Feinbaum R.L."/>
            <person name="Miyata S."/>
            <person name="Diggins L.T."/>
            <person name="He J."/>
            <person name="Saucier M."/>
            <person name="Deziel E."/>
            <person name="Friedman L."/>
            <person name="Li L."/>
            <person name="Grills G."/>
            <person name="Montgomery K."/>
            <person name="Kucherlapati R."/>
            <person name="Rahme L.G."/>
            <person name="Ausubel F.M."/>
        </authorList>
    </citation>
    <scope>NUCLEOTIDE SEQUENCE [LARGE SCALE GENOMIC DNA]</scope>
    <source>
        <strain>UCBPP-PA14</strain>
    </source>
</reference>
<keyword id="KW-0227">DNA damage</keyword>
<keyword id="KW-0234">DNA repair</keyword>
<keyword id="KW-0378">Hydrolase</keyword>
<name>3MGH_PSEAB</name>
<gene>
    <name type="ordered locus">PA14_11970</name>
</gene>
<protein>
    <recommendedName>
        <fullName evidence="1">Putative 3-methyladenine DNA glycosylase</fullName>
        <ecNumber evidence="1">3.2.2.-</ecNumber>
    </recommendedName>
</protein>
<proteinExistence type="inferred from homology"/>
<accession>Q02SH7</accession>
<dbReference type="EC" id="3.2.2.-" evidence="1"/>
<dbReference type="EMBL" id="CP000438">
    <property type="protein sequence ID" value="ABJ13284.1"/>
    <property type="molecule type" value="Genomic_DNA"/>
</dbReference>
<dbReference type="RefSeq" id="WP_003137683.1">
    <property type="nucleotide sequence ID" value="NZ_CP034244.1"/>
</dbReference>
<dbReference type="SMR" id="Q02SH7"/>
<dbReference type="KEGG" id="pau:PA14_11970"/>
<dbReference type="PseudoCAP" id="PA14_11970"/>
<dbReference type="HOGENOM" id="CLU_104187_0_0_6"/>
<dbReference type="BioCyc" id="PAER208963:G1G74-994-MONOMER"/>
<dbReference type="Proteomes" id="UP000000653">
    <property type="component" value="Chromosome"/>
</dbReference>
<dbReference type="GO" id="GO:0003905">
    <property type="term" value="F:alkylbase DNA N-glycosylase activity"/>
    <property type="evidence" value="ECO:0007669"/>
    <property type="project" value="InterPro"/>
</dbReference>
<dbReference type="GO" id="GO:0003677">
    <property type="term" value="F:DNA binding"/>
    <property type="evidence" value="ECO:0007669"/>
    <property type="project" value="InterPro"/>
</dbReference>
<dbReference type="GO" id="GO:0006284">
    <property type="term" value="P:base-excision repair"/>
    <property type="evidence" value="ECO:0007669"/>
    <property type="project" value="InterPro"/>
</dbReference>
<dbReference type="CDD" id="cd00540">
    <property type="entry name" value="AAG"/>
    <property type="match status" value="1"/>
</dbReference>
<dbReference type="FunFam" id="3.10.300.10:FF:000003">
    <property type="entry name" value="Putative 3-methyladenine DNA glycosylase"/>
    <property type="match status" value="1"/>
</dbReference>
<dbReference type="Gene3D" id="3.10.300.10">
    <property type="entry name" value="Methylpurine-DNA glycosylase (MPG)"/>
    <property type="match status" value="1"/>
</dbReference>
<dbReference type="HAMAP" id="MF_00527">
    <property type="entry name" value="3MGH"/>
    <property type="match status" value="1"/>
</dbReference>
<dbReference type="InterPro" id="IPR011034">
    <property type="entry name" value="Formyl_transferase-like_C_sf"/>
</dbReference>
<dbReference type="InterPro" id="IPR003180">
    <property type="entry name" value="MPG"/>
</dbReference>
<dbReference type="InterPro" id="IPR036995">
    <property type="entry name" value="MPG_sf"/>
</dbReference>
<dbReference type="NCBIfam" id="NF002005">
    <property type="entry name" value="PRK00802.1-5"/>
    <property type="match status" value="1"/>
</dbReference>
<dbReference type="PANTHER" id="PTHR10429">
    <property type="entry name" value="DNA-3-METHYLADENINE GLYCOSYLASE"/>
    <property type="match status" value="1"/>
</dbReference>
<dbReference type="PANTHER" id="PTHR10429:SF0">
    <property type="entry name" value="DNA-3-METHYLADENINE GLYCOSYLASE"/>
    <property type="match status" value="1"/>
</dbReference>
<dbReference type="Pfam" id="PF02245">
    <property type="entry name" value="Pur_DNA_glyco"/>
    <property type="match status" value="1"/>
</dbReference>
<dbReference type="SUPFAM" id="SSF50486">
    <property type="entry name" value="FMT C-terminal domain-like"/>
    <property type="match status" value="1"/>
</dbReference>
<feature type="chain" id="PRO_1000050997" description="Putative 3-methyladenine DNA glycosylase">
    <location>
        <begin position="1"/>
        <end position="239"/>
    </location>
</feature>
<evidence type="ECO:0000255" key="1">
    <source>
        <dbReference type="HAMAP-Rule" id="MF_00527"/>
    </source>
</evidence>
<sequence length="239" mass="26947">MSRDPILSLPWPDARPLPDTFFDRDALLVARELLGKVIRHRQGNLWLAARIIETEAYYLEEKGSHASLGYTEKRKALFLDGGHIYMYYARGGDSLNFSAGGPGNAVLIKSGHPWLDRISDHAALERMQNLNPDSQGRPREIGRLCAGQTLLCKAMGLKVPEWDAQRFDPQRLFVDDVGERPSQVIQAARLGIPKGRDEHLPYRFVDAAFAAFCTRNPLRRGQVAGRDYHLLGHQDPHLQ</sequence>
<comment type="similarity">
    <text evidence="1">Belongs to the DNA glycosylase MPG family.</text>
</comment>